<organism>
    <name type="scientific">Xylella fastidiosa (strain M23)</name>
    <dbReference type="NCBI Taxonomy" id="405441"/>
    <lineage>
        <taxon>Bacteria</taxon>
        <taxon>Pseudomonadati</taxon>
        <taxon>Pseudomonadota</taxon>
        <taxon>Gammaproteobacteria</taxon>
        <taxon>Lysobacterales</taxon>
        <taxon>Lysobacteraceae</taxon>
        <taxon>Xylella</taxon>
    </lineage>
</organism>
<dbReference type="EMBL" id="CP001011">
    <property type="protein sequence ID" value="ACB92668.1"/>
    <property type="molecule type" value="Genomic_DNA"/>
</dbReference>
<dbReference type="RefSeq" id="WP_004087333.1">
    <property type="nucleotide sequence ID" value="NC_010577.1"/>
</dbReference>
<dbReference type="SMR" id="B2I5M3"/>
<dbReference type="KEGG" id="xfn:XfasM23_1243"/>
<dbReference type="HOGENOM" id="CLU_180796_4_2_6"/>
<dbReference type="Proteomes" id="UP000001698">
    <property type="component" value="Chromosome"/>
</dbReference>
<dbReference type="Gene3D" id="1.20.5.300">
    <property type="match status" value="1"/>
</dbReference>
<dbReference type="HAMAP" id="MF_00715">
    <property type="entry name" value="SlyX"/>
    <property type="match status" value="1"/>
</dbReference>
<dbReference type="InterPro" id="IPR007236">
    <property type="entry name" value="SlyX"/>
</dbReference>
<dbReference type="NCBIfam" id="NF002024">
    <property type="entry name" value="PRK00846.1"/>
    <property type="match status" value="1"/>
</dbReference>
<dbReference type="PANTHER" id="PTHR36508">
    <property type="entry name" value="PROTEIN SLYX"/>
    <property type="match status" value="1"/>
</dbReference>
<dbReference type="PANTHER" id="PTHR36508:SF1">
    <property type="entry name" value="PROTEIN SLYX"/>
    <property type="match status" value="1"/>
</dbReference>
<dbReference type="Pfam" id="PF04102">
    <property type="entry name" value="SlyX"/>
    <property type="match status" value="1"/>
</dbReference>
<reference key="1">
    <citation type="journal article" date="2010" name="J. Bacteriol.">
        <title>Whole genome sequences of two Xylella fastidiosa strains (M12 and M23) causing almond leaf scorch disease in California.</title>
        <authorList>
            <person name="Chen J."/>
            <person name="Xie G."/>
            <person name="Han S."/>
            <person name="Chertkov O."/>
            <person name="Sims D."/>
            <person name="Civerolo E.L."/>
        </authorList>
    </citation>
    <scope>NUCLEOTIDE SEQUENCE [LARGE SCALE GENOMIC DNA]</scope>
    <source>
        <strain>M23</strain>
    </source>
</reference>
<accession>B2I5M3</accession>
<protein>
    <recommendedName>
        <fullName evidence="1">Protein SlyX homolog</fullName>
    </recommendedName>
</protein>
<feature type="chain" id="PRO_1000195863" description="Protein SlyX homolog">
    <location>
        <begin position="1"/>
        <end position="78"/>
    </location>
</feature>
<evidence type="ECO:0000255" key="1">
    <source>
        <dbReference type="HAMAP-Rule" id="MF_00715"/>
    </source>
</evidence>
<comment type="similarity">
    <text evidence="1">Belongs to the SlyX family.</text>
</comment>
<proteinExistence type="inferred from homology"/>
<sequence>MHEKLLTLCDCAFEARLIELEMRVSFQEQALTEISEALAETRLIGARNAELMRHLLEELGKVRNTLYEHPIDEPPPHY</sequence>
<gene>
    <name evidence="1" type="primary">slyX</name>
    <name type="ordered locus">XfasM23_1243</name>
</gene>
<name>SLYX_XYLF2</name>